<organism>
    <name type="scientific">Drosophila melanogaster</name>
    <name type="common">Fruit fly</name>
    <dbReference type="NCBI Taxonomy" id="7227"/>
    <lineage>
        <taxon>Eukaryota</taxon>
        <taxon>Metazoa</taxon>
        <taxon>Ecdysozoa</taxon>
        <taxon>Arthropoda</taxon>
        <taxon>Hexapoda</taxon>
        <taxon>Insecta</taxon>
        <taxon>Pterygota</taxon>
        <taxon>Neoptera</taxon>
        <taxon>Endopterygota</taxon>
        <taxon>Diptera</taxon>
        <taxon>Brachycera</taxon>
        <taxon>Muscomorpha</taxon>
        <taxon>Ephydroidea</taxon>
        <taxon>Drosophilidae</taxon>
        <taxon>Drosophila</taxon>
        <taxon>Sophophora</taxon>
    </lineage>
</organism>
<evidence type="ECO:0000255" key="1"/>
<evidence type="ECO:0000256" key="2">
    <source>
        <dbReference type="SAM" id="MobiDB-lite"/>
    </source>
</evidence>
<evidence type="ECO:0000269" key="3">
    <source>
    </source>
</evidence>
<evidence type="ECO:0000305" key="4"/>
<keyword id="KW-1185">Reference proteome</keyword>
<keyword id="KW-0677">Repeat</keyword>
<keyword id="KW-0964">Secreted</keyword>
<keyword id="KW-0732">Signal</keyword>
<dbReference type="EMBL" id="X61945">
    <property type="protein sequence ID" value="CAA43952.1"/>
    <property type="status" value="ALT_FRAME"/>
    <property type="molecule type" value="Genomic_DNA"/>
</dbReference>
<dbReference type="EMBL" id="AE014298">
    <property type="protein sequence ID" value="AAF45855.1"/>
    <property type="molecule type" value="Genomic_DNA"/>
</dbReference>
<dbReference type="EMBL" id="AL024484">
    <property type="protein sequence ID" value="CAA19670.1"/>
    <property type="molecule type" value="Genomic_DNA"/>
</dbReference>
<dbReference type="EMBL" id="AY119010">
    <property type="protein sequence ID" value="AAM50870.1"/>
    <property type="molecule type" value="mRNA"/>
</dbReference>
<dbReference type="PIR" id="S33823">
    <property type="entry name" value="S33823"/>
</dbReference>
<dbReference type="RefSeq" id="NP_525060.1">
    <property type="nucleotide sequence ID" value="NM_080321.1"/>
</dbReference>
<dbReference type="STRING" id="7227.FBpp0070514"/>
<dbReference type="PaxDb" id="7227-FBpp0070514"/>
<dbReference type="EnsemblMetazoa" id="FBtr0070539">
    <property type="protein sequence ID" value="FBpp0070514"/>
    <property type="gene ID" value="FBgn0010295"/>
</dbReference>
<dbReference type="GeneID" id="31299"/>
<dbReference type="KEGG" id="dme:Dmel_CG10788"/>
<dbReference type="AGR" id="FB:FBgn0010295"/>
<dbReference type="CTD" id="31299"/>
<dbReference type="FlyBase" id="FBgn0010295">
    <property type="gene designation" value="ng3"/>
</dbReference>
<dbReference type="VEuPathDB" id="VectorBase:FBgn0010295"/>
<dbReference type="HOGENOM" id="CLU_138139_1_1_1"/>
<dbReference type="InParanoid" id="P40140"/>
<dbReference type="OMA" id="RIRHIYR"/>
<dbReference type="BioGRID-ORCS" id="31299">
    <property type="hits" value="0 hits in 1 CRISPR screen"/>
</dbReference>
<dbReference type="ChiTaRS" id="ng3">
    <property type="organism name" value="fly"/>
</dbReference>
<dbReference type="GenomeRNAi" id="31299"/>
<dbReference type="PRO" id="PR:P40140"/>
<dbReference type="Proteomes" id="UP000000803">
    <property type="component" value="Chromosome X"/>
</dbReference>
<dbReference type="Bgee" id="FBgn0010295">
    <property type="expression patterns" value="Expressed in saliva-secreting gland and 4 other cell types or tissues"/>
</dbReference>
<dbReference type="GO" id="GO:0005576">
    <property type="term" value="C:extracellular region"/>
    <property type="evidence" value="ECO:0007669"/>
    <property type="project" value="UniProtKB-SubCell"/>
</dbReference>
<dbReference type="InterPro" id="IPR054054">
    <property type="entry name" value="Ng_1-3-like"/>
</dbReference>
<dbReference type="Pfam" id="PF21827">
    <property type="entry name" value="New_glue"/>
    <property type="match status" value="1"/>
</dbReference>
<sequence length="146" mass="15952">MRYSCVLLLLATVACLLIPQTGGSTATTTSTSASATTTTSASATTTTASDTTTTTAATTTTSSSSSKSKKKKRTYHYTRHVYRPKRIRHIYRHKADDDESSTDRTSTRSRRRRRSSSSSSSSGSTSSRSGNSRIRRRRARSARRLS</sequence>
<reference key="1">
    <citation type="journal article" date="1993" name="J. Mol. Biol.">
        <title>Dense cluster of genes is located at the ecdysone-regulated 3C puff of Drosophila melanogaster.</title>
        <authorList>
            <person name="Furia M."/>
            <person name="D'Avino P.P."/>
            <person name="Crispi S."/>
            <person name="Artiaco D."/>
            <person name="Polito L.C."/>
        </authorList>
    </citation>
    <scope>NUCLEOTIDE SEQUENCE [GENOMIC DNA]</scope>
    <scope>TISSUE SPECIFICITY</scope>
    <scope>DEVELOPMENTAL STAGE</scope>
    <source>
        <strain>Oregon-R</strain>
        <tissue>Salivary gland</tissue>
    </source>
</reference>
<reference key="2">
    <citation type="journal article" date="2000" name="Science">
        <title>The genome sequence of Drosophila melanogaster.</title>
        <authorList>
            <person name="Adams M.D."/>
            <person name="Celniker S.E."/>
            <person name="Holt R.A."/>
            <person name="Evans C.A."/>
            <person name="Gocayne J.D."/>
            <person name="Amanatides P.G."/>
            <person name="Scherer S.E."/>
            <person name="Li P.W."/>
            <person name="Hoskins R.A."/>
            <person name="Galle R.F."/>
            <person name="George R.A."/>
            <person name="Lewis S.E."/>
            <person name="Richards S."/>
            <person name="Ashburner M."/>
            <person name="Henderson S.N."/>
            <person name="Sutton G.G."/>
            <person name="Wortman J.R."/>
            <person name="Yandell M.D."/>
            <person name="Zhang Q."/>
            <person name="Chen L.X."/>
            <person name="Brandon R.C."/>
            <person name="Rogers Y.-H.C."/>
            <person name="Blazej R.G."/>
            <person name="Champe M."/>
            <person name="Pfeiffer B.D."/>
            <person name="Wan K.H."/>
            <person name="Doyle C."/>
            <person name="Baxter E.G."/>
            <person name="Helt G."/>
            <person name="Nelson C.R."/>
            <person name="Miklos G.L.G."/>
            <person name="Abril J.F."/>
            <person name="Agbayani A."/>
            <person name="An H.-J."/>
            <person name="Andrews-Pfannkoch C."/>
            <person name="Baldwin D."/>
            <person name="Ballew R.M."/>
            <person name="Basu A."/>
            <person name="Baxendale J."/>
            <person name="Bayraktaroglu L."/>
            <person name="Beasley E.M."/>
            <person name="Beeson K.Y."/>
            <person name="Benos P.V."/>
            <person name="Berman B.P."/>
            <person name="Bhandari D."/>
            <person name="Bolshakov S."/>
            <person name="Borkova D."/>
            <person name="Botchan M.R."/>
            <person name="Bouck J."/>
            <person name="Brokstein P."/>
            <person name="Brottier P."/>
            <person name="Burtis K.C."/>
            <person name="Busam D.A."/>
            <person name="Butler H."/>
            <person name="Cadieu E."/>
            <person name="Center A."/>
            <person name="Chandra I."/>
            <person name="Cherry J.M."/>
            <person name="Cawley S."/>
            <person name="Dahlke C."/>
            <person name="Davenport L.B."/>
            <person name="Davies P."/>
            <person name="de Pablos B."/>
            <person name="Delcher A."/>
            <person name="Deng Z."/>
            <person name="Mays A.D."/>
            <person name="Dew I."/>
            <person name="Dietz S.M."/>
            <person name="Dodson K."/>
            <person name="Doup L.E."/>
            <person name="Downes M."/>
            <person name="Dugan-Rocha S."/>
            <person name="Dunkov B.C."/>
            <person name="Dunn P."/>
            <person name="Durbin K.J."/>
            <person name="Evangelista C.C."/>
            <person name="Ferraz C."/>
            <person name="Ferriera S."/>
            <person name="Fleischmann W."/>
            <person name="Fosler C."/>
            <person name="Gabrielian A.E."/>
            <person name="Garg N.S."/>
            <person name="Gelbart W.M."/>
            <person name="Glasser K."/>
            <person name="Glodek A."/>
            <person name="Gong F."/>
            <person name="Gorrell J.H."/>
            <person name="Gu Z."/>
            <person name="Guan P."/>
            <person name="Harris M."/>
            <person name="Harris N.L."/>
            <person name="Harvey D.A."/>
            <person name="Heiman T.J."/>
            <person name="Hernandez J.R."/>
            <person name="Houck J."/>
            <person name="Hostin D."/>
            <person name="Houston K.A."/>
            <person name="Howland T.J."/>
            <person name="Wei M.-H."/>
            <person name="Ibegwam C."/>
            <person name="Jalali M."/>
            <person name="Kalush F."/>
            <person name="Karpen G.H."/>
            <person name="Ke Z."/>
            <person name="Kennison J.A."/>
            <person name="Ketchum K.A."/>
            <person name="Kimmel B.E."/>
            <person name="Kodira C.D."/>
            <person name="Kraft C.L."/>
            <person name="Kravitz S."/>
            <person name="Kulp D."/>
            <person name="Lai Z."/>
            <person name="Lasko P."/>
            <person name="Lei Y."/>
            <person name="Levitsky A.A."/>
            <person name="Li J.H."/>
            <person name="Li Z."/>
            <person name="Liang Y."/>
            <person name="Lin X."/>
            <person name="Liu X."/>
            <person name="Mattei B."/>
            <person name="McIntosh T.C."/>
            <person name="McLeod M.P."/>
            <person name="McPherson D."/>
            <person name="Merkulov G."/>
            <person name="Milshina N.V."/>
            <person name="Mobarry C."/>
            <person name="Morris J."/>
            <person name="Moshrefi A."/>
            <person name="Mount S.M."/>
            <person name="Moy M."/>
            <person name="Murphy B."/>
            <person name="Murphy L."/>
            <person name="Muzny D.M."/>
            <person name="Nelson D.L."/>
            <person name="Nelson D.R."/>
            <person name="Nelson K.A."/>
            <person name="Nixon K."/>
            <person name="Nusskern D.R."/>
            <person name="Pacleb J.M."/>
            <person name="Palazzolo M."/>
            <person name="Pittman G.S."/>
            <person name="Pan S."/>
            <person name="Pollard J."/>
            <person name="Puri V."/>
            <person name="Reese M.G."/>
            <person name="Reinert K."/>
            <person name="Remington K."/>
            <person name="Saunders R.D.C."/>
            <person name="Scheeler F."/>
            <person name="Shen H."/>
            <person name="Shue B.C."/>
            <person name="Siden-Kiamos I."/>
            <person name="Simpson M."/>
            <person name="Skupski M.P."/>
            <person name="Smith T.J."/>
            <person name="Spier E."/>
            <person name="Spradling A.C."/>
            <person name="Stapleton M."/>
            <person name="Strong R."/>
            <person name="Sun E."/>
            <person name="Svirskas R."/>
            <person name="Tector C."/>
            <person name="Turner R."/>
            <person name="Venter E."/>
            <person name="Wang A.H."/>
            <person name="Wang X."/>
            <person name="Wang Z.-Y."/>
            <person name="Wassarman D.A."/>
            <person name="Weinstock G.M."/>
            <person name="Weissenbach J."/>
            <person name="Williams S.M."/>
            <person name="Woodage T."/>
            <person name="Worley K.C."/>
            <person name="Wu D."/>
            <person name="Yang S."/>
            <person name="Yao Q.A."/>
            <person name="Ye J."/>
            <person name="Yeh R.-F."/>
            <person name="Zaveri J.S."/>
            <person name="Zhan M."/>
            <person name="Zhang G."/>
            <person name="Zhao Q."/>
            <person name="Zheng L."/>
            <person name="Zheng X.H."/>
            <person name="Zhong F.N."/>
            <person name="Zhong W."/>
            <person name="Zhou X."/>
            <person name="Zhu S.C."/>
            <person name="Zhu X."/>
            <person name="Smith H.O."/>
            <person name="Gibbs R.A."/>
            <person name="Myers E.W."/>
            <person name="Rubin G.M."/>
            <person name="Venter J.C."/>
        </authorList>
    </citation>
    <scope>NUCLEOTIDE SEQUENCE [LARGE SCALE GENOMIC DNA]</scope>
    <source>
        <strain>Berkeley</strain>
    </source>
</reference>
<reference key="3">
    <citation type="journal article" date="2002" name="Genome Biol.">
        <title>Annotation of the Drosophila melanogaster euchromatic genome: a systematic review.</title>
        <authorList>
            <person name="Misra S."/>
            <person name="Crosby M.A."/>
            <person name="Mungall C.J."/>
            <person name="Matthews B.B."/>
            <person name="Campbell K.S."/>
            <person name="Hradecky P."/>
            <person name="Huang Y."/>
            <person name="Kaminker J.S."/>
            <person name="Millburn G.H."/>
            <person name="Prochnik S.E."/>
            <person name="Smith C.D."/>
            <person name="Tupy J.L."/>
            <person name="Whitfield E.J."/>
            <person name="Bayraktaroglu L."/>
            <person name="Berman B.P."/>
            <person name="Bettencourt B.R."/>
            <person name="Celniker S.E."/>
            <person name="de Grey A.D.N.J."/>
            <person name="Drysdale R.A."/>
            <person name="Harris N.L."/>
            <person name="Richter J."/>
            <person name="Russo S."/>
            <person name="Schroeder A.J."/>
            <person name="Shu S.Q."/>
            <person name="Stapleton M."/>
            <person name="Yamada C."/>
            <person name="Ashburner M."/>
            <person name="Gelbart W.M."/>
            <person name="Rubin G.M."/>
            <person name="Lewis S.E."/>
        </authorList>
    </citation>
    <scope>GENOME REANNOTATION</scope>
    <source>
        <strain>Berkeley</strain>
    </source>
</reference>
<reference key="4">
    <citation type="journal article" date="2000" name="Science">
        <title>From sequence to chromosome: the tip of the X chromosome of D. melanogaster.</title>
        <authorList>
            <person name="Benos P.V."/>
            <person name="Gatt M.K."/>
            <person name="Ashburner M."/>
            <person name="Murphy L."/>
            <person name="Harris D."/>
            <person name="Barrell B.G."/>
            <person name="Ferraz C."/>
            <person name="Vidal S."/>
            <person name="Brun C."/>
            <person name="Demailles J."/>
            <person name="Cadieu E."/>
            <person name="Dreano S."/>
            <person name="Gloux S."/>
            <person name="Lelaure V."/>
            <person name="Mottier S."/>
            <person name="Galibert F."/>
            <person name="Borkova D."/>
            <person name="Minana B."/>
            <person name="Kafatos F.C."/>
            <person name="Louis C."/>
            <person name="Siden-Kiamos I."/>
            <person name="Bolshakov S."/>
            <person name="Papagiannakis G."/>
            <person name="Spanos L."/>
            <person name="Cox S."/>
            <person name="Madueno E."/>
            <person name="de Pablos B."/>
            <person name="Modolell J."/>
            <person name="Peter A."/>
            <person name="Schoettler P."/>
            <person name="Werner M."/>
            <person name="Mourkioti F."/>
            <person name="Beinert N."/>
            <person name="Dowe G."/>
            <person name="Schaefer U."/>
            <person name="Jaeckle H."/>
            <person name="Bucheton A."/>
            <person name="Callister D.M."/>
            <person name="Campbell L.A."/>
            <person name="Darlamitsou A."/>
            <person name="Henderson N.S."/>
            <person name="McMillan P.J."/>
            <person name="Salles C."/>
            <person name="Tait E.A."/>
            <person name="Valenti P."/>
            <person name="Saunders R.D.C."/>
            <person name="Glover D.M."/>
        </authorList>
    </citation>
    <scope>NUCLEOTIDE SEQUENCE [LARGE SCALE GENOMIC DNA]</scope>
    <source>
        <strain>Oregon-R</strain>
    </source>
</reference>
<reference key="5">
    <citation type="journal article" date="2002" name="Genome Biol.">
        <title>A Drosophila full-length cDNA resource.</title>
        <authorList>
            <person name="Stapleton M."/>
            <person name="Carlson J.W."/>
            <person name="Brokstein P."/>
            <person name="Yu C."/>
            <person name="Champe M."/>
            <person name="George R.A."/>
            <person name="Guarin H."/>
            <person name="Kronmiller B."/>
            <person name="Pacleb J.M."/>
            <person name="Park S."/>
            <person name="Wan K.H."/>
            <person name="Rubin G.M."/>
            <person name="Celniker S.E."/>
        </authorList>
    </citation>
    <scope>NUCLEOTIDE SEQUENCE [LARGE SCALE MRNA] OF 5-146</scope>
    <source>
        <strain>Berkeley</strain>
        <tissue>Larva</tissue>
        <tissue>Pupae</tissue>
    </source>
</reference>
<name>NG3_DROME</name>
<accession>P40140</accession>
<accession>O76915</accession>
<accession>Q8MS91</accession>
<proteinExistence type="evidence at transcript level"/>
<comment type="subcellular location">
    <subcellularLocation>
        <location evidence="4">Secreted</location>
    </subcellularLocation>
</comment>
<comment type="tissue specificity">
    <text evidence="3">Salivary gland specific.</text>
</comment>
<comment type="developmental stage">
    <text evidence="3">Abundant during the third larval stage.</text>
</comment>
<comment type="sequence caution" evidence="4">
    <conflict type="frameshift">
        <sequence resource="EMBL-CDS" id="CAA43952"/>
    </conflict>
</comment>
<protein>
    <recommendedName>
        <fullName>Protein new-glue 3</fullName>
        <shortName>NG-3</shortName>
    </recommendedName>
</protein>
<gene>
    <name type="primary">ng3</name>
    <name type="ORF">CG10788</name>
</gene>
<feature type="signal peptide" evidence="1">
    <location>
        <begin position="1"/>
        <end position="23"/>
    </location>
</feature>
<feature type="chain" id="PRO_0000021812" description="Protein new-glue 3">
    <location>
        <begin position="24"/>
        <end position="146"/>
    </location>
</feature>
<feature type="repeat" description="1">
    <location>
        <begin position="31"/>
        <end position="38"/>
    </location>
</feature>
<feature type="repeat" description="2">
    <location>
        <begin position="39"/>
        <end position="46"/>
    </location>
</feature>
<feature type="repeat" description="3">
    <location>
        <begin position="47"/>
        <end position="53"/>
    </location>
</feature>
<feature type="repeat" description="4">
    <location>
        <begin position="54"/>
        <end position="61"/>
    </location>
</feature>
<feature type="region of interest" description="Disordered" evidence="2">
    <location>
        <begin position="23"/>
        <end position="146"/>
    </location>
</feature>
<feature type="region of interest" description="4 X 8 AA approximate tandem repeats of T-S-A-S-A-T-T-T">
    <location>
        <begin position="31"/>
        <end position="61"/>
    </location>
</feature>
<feature type="compositionally biased region" description="Low complexity" evidence="2">
    <location>
        <begin position="24"/>
        <end position="66"/>
    </location>
</feature>
<feature type="compositionally biased region" description="Basic residues" evidence="2">
    <location>
        <begin position="67"/>
        <end position="92"/>
    </location>
</feature>
<feature type="compositionally biased region" description="Basic and acidic residues" evidence="2">
    <location>
        <begin position="93"/>
        <end position="106"/>
    </location>
</feature>
<feature type="compositionally biased region" description="Low complexity" evidence="2">
    <location>
        <begin position="116"/>
        <end position="132"/>
    </location>
</feature>
<feature type="compositionally biased region" description="Basic residues" evidence="2">
    <location>
        <begin position="133"/>
        <end position="146"/>
    </location>
</feature>